<accession>C0Q3L6</accession>
<feature type="chain" id="PRO_1000185176" description="L-rhamnose-proton symporter">
    <location>
        <begin position="1"/>
        <end position="344"/>
    </location>
</feature>
<feature type="transmembrane region" description="Helical" evidence="1">
    <location>
        <begin position="4"/>
        <end position="24"/>
    </location>
</feature>
<feature type="transmembrane region" description="Helical" evidence="1">
    <location>
        <begin position="38"/>
        <end position="58"/>
    </location>
</feature>
<feature type="transmembrane region" description="Helical" evidence="1">
    <location>
        <begin position="68"/>
        <end position="88"/>
    </location>
</feature>
<feature type="transmembrane region" description="Helical" evidence="1">
    <location>
        <begin position="101"/>
        <end position="121"/>
    </location>
</feature>
<feature type="transmembrane region" description="Helical" evidence="1">
    <location>
        <begin position="137"/>
        <end position="157"/>
    </location>
</feature>
<feature type="transmembrane region" description="Helical" evidence="1">
    <location>
        <begin position="175"/>
        <end position="195"/>
    </location>
</feature>
<feature type="transmembrane region" description="Helical" evidence="1">
    <location>
        <begin position="214"/>
        <end position="234"/>
    </location>
</feature>
<feature type="transmembrane region" description="Helical" evidence="1">
    <location>
        <begin position="259"/>
        <end position="279"/>
    </location>
</feature>
<feature type="transmembrane region" description="Helical" evidence="1">
    <location>
        <begin position="290"/>
        <end position="310"/>
    </location>
</feature>
<feature type="transmembrane region" description="Helical" evidence="1">
    <location>
        <begin position="321"/>
        <end position="341"/>
    </location>
</feature>
<organism>
    <name type="scientific">Salmonella paratyphi C (strain RKS4594)</name>
    <dbReference type="NCBI Taxonomy" id="476213"/>
    <lineage>
        <taxon>Bacteria</taxon>
        <taxon>Pseudomonadati</taxon>
        <taxon>Pseudomonadota</taxon>
        <taxon>Gammaproteobacteria</taxon>
        <taxon>Enterobacterales</taxon>
        <taxon>Enterobacteriaceae</taxon>
        <taxon>Salmonella</taxon>
    </lineage>
</organism>
<evidence type="ECO:0000255" key="1">
    <source>
        <dbReference type="HAMAP-Rule" id="MF_01532"/>
    </source>
</evidence>
<protein>
    <recommendedName>
        <fullName evidence="1">L-rhamnose-proton symporter</fullName>
    </recommendedName>
    <alternativeName>
        <fullName evidence="1">L-rhamnose-H(+) transport protein</fullName>
    </alternativeName>
</protein>
<reference key="1">
    <citation type="journal article" date="2009" name="PLoS ONE">
        <title>Salmonella paratyphi C: genetic divergence from Salmonella choleraesuis and pathogenic convergence with Salmonella typhi.</title>
        <authorList>
            <person name="Liu W.-Q."/>
            <person name="Feng Y."/>
            <person name="Wang Y."/>
            <person name="Zou Q.-H."/>
            <person name="Chen F."/>
            <person name="Guo J.-T."/>
            <person name="Peng Y.-H."/>
            <person name="Jin Y."/>
            <person name="Li Y.-G."/>
            <person name="Hu S.-N."/>
            <person name="Johnston R.N."/>
            <person name="Liu G.-R."/>
            <person name="Liu S.-L."/>
        </authorList>
    </citation>
    <scope>NUCLEOTIDE SEQUENCE [LARGE SCALE GENOMIC DNA]</scope>
    <source>
        <strain>RKS4594</strain>
    </source>
</reference>
<dbReference type="EMBL" id="CP000857">
    <property type="protein sequence ID" value="ACN48218.1"/>
    <property type="molecule type" value="Genomic_DNA"/>
</dbReference>
<dbReference type="RefSeq" id="WP_000063541.1">
    <property type="nucleotide sequence ID" value="NC_012125.1"/>
</dbReference>
<dbReference type="KEGG" id="sei:SPC_4154"/>
<dbReference type="HOGENOM" id="CLU_066437_0_0_6"/>
<dbReference type="Proteomes" id="UP000001599">
    <property type="component" value="Chromosome"/>
</dbReference>
<dbReference type="GO" id="GO:0005886">
    <property type="term" value="C:plasma membrane"/>
    <property type="evidence" value="ECO:0007669"/>
    <property type="project" value="UniProtKB-SubCell"/>
</dbReference>
<dbReference type="GO" id="GO:0015153">
    <property type="term" value="F:rhamnose transmembrane transporter activity"/>
    <property type="evidence" value="ECO:0007669"/>
    <property type="project" value="UniProtKB-UniRule"/>
</dbReference>
<dbReference type="GO" id="GO:0015293">
    <property type="term" value="F:symporter activity"/>
    <property type="evidence" value="ECO:0007669"/>
    <property type="project" value="UniProtKB-KW"/>
</dbReference>
<dbReference type="HAMAP" id="MF_01532">
    <property type="entry name" value="RhaT"/>
    <property type="match status" value="1"/>
</dbReference>
<dbReference type="InterPro" id="IPR004673">
    <property type="entry name" value="L-rhamnose-proton_sym_RhaT"/>
</dbReference>
<dbReference type="NCBIfam" id="NF010021">
    <property type="entry name" value="PRK13499.1-1"/>
    <property type="match status" value="1"/>
</dbReference>
<dbReference type="NCBIfam" id="NF010023">
    <property type="entry name" value="PRK13499.1-3"/>
    <property type="match status" value="1"/>
</dbReference>
<dbReference type="NCBIfam" id="TIGR00776">
    <property type="entry name" value="RhaT"/>
    <property type="match status" value="1"/>
</dbReference>
<dbReference type="Pfam" id="PF06379">
    <property type="entry name" value="RhaT"/>
    <property type="match status" value="1"/>
</dbReference>
<comment type="function">
    <text evidence="1">Uptake of L-rhamnose across the cytoplasmic membrane with the concomitant transport of protons into the cell (symport system).</text>
</comment>
<comment type="catalytic activity">
    <reaction evidence="1">
        <text>L-rhamnopyranose(in) + H(+)(in) = L-rhamnopyranose(out) + H(+)(out)</text>
        <dbReference type="Rhea" id="RHEA:29947"/>
        <dbReference type="ChEBI" id="CHEBI:15378"/>
        <dbReference type="ChEBI" id="CHEBI:62346"/>
    </reaction>
    <physiologicalReaction direction="right-to-left" evidence="1">
        <dbReference type="Rhea" id="RHEA:29949"/>
    </physiologicalReaction>
</comment>
<comment type="subcellular location">
    <subcellularLocation>
        <location evidence="1">Cell inner membrane</location>
        <topology evidence="1">Multi-pass membrane protein</topology>
    </subcellularLocation>
</comment>
<comment type="similarity">
    <text evidence="1">Belongs to the L-rhamnose transporter (TC 2.A.7.6) family.</text>
</comment>
<sequence>MSNAITMGIFWHLIGAASAACFYAPFKQVKQWSWETMWSVGGIVSWLILPWTISALLLPDFWAYYGQFNLSTLLPVFLFGAMWGIGNINYGLTMRYLGMSMGIGIAIGITLIVGTLMTPIINGNFDVLIHTEGGRMTLLGVFVALIGVGIVTRAGQLKERKMGIKAEEFNLKKGLLLAVMCGIFSAGMSFAMNAAKPMHEAAAALGVDPLYVALPSYVVIMGGGALVNLGFCFIRLAKVQNLSIKADFSLARPLIISNILLSALGGLMWYLQFFFYAWGHARIPAQYDYMSWMLHMSFYVLCGGLVGLVLKEWKNAGRRPVAVLSLGCVVIIIAANIVGLGMAS</sequence>
<keyword id="KW-0997">Cell inner membrane</keyword>
<keyword id="KW-1003">Cell membrane</keyword>
<keyword id="KW-0472">Membrane</keyword>
<keyword id="KW-0762">Sugar transport</keyword>
<keyword id="KW-0769">Symport</keyword>
<keyword id="KW-0812">Transmembrane</keyword>
<keyword id="KW-1133">Transmembrane helix</keyword>
<keyword id="KW-0813">Transport</keyword>
<name>RHAT_SALPC</name>
<proteinExistence type="inferred from homology"/>
<gene>
    <name evidence="1" type="primary">rhaT</name>
    <name type="ordered locus">SPC_4154</name>
</gene>